<dbReference type="EC" id="6.1.1.11" evidence="1"/>
<dbReference type="EMBL" id="CP000359">
    <property type="protein sequence ID" value="ABF45235.1"/>
    <property type="molecule type" value="Genomic_DNA"/>
</dbReference>
<dbReference type="RefSeq" id="WP_011530072.1">
    <property type="nucleotide sequence ID" value="NC_008025.1"/>
</dbReference>
<dbReference type="SMR" id="Q1IZU9"/>
<dbReference type="STRING" id="319795.Dgeo_0934"/>
<dbReference type="KEGG" id="dge:Dgeo_0934"/>
<dbReference type="eggNOG" id="COG0172">
    <property type="taxonomic scope" value="Bacteria"/>
</dbReference>
<dbReference type="HOGENOM" id="CLU_023797_1_0_0"/>
<dbReference type="UniPathway" id="UPA00906">
    <property type="reaction ID" value="UER00895"/>
</dbReference>
<dbReference type="Proteomes" id="UP000002431">
    <property type="component" value="Chromosome"/>
</dbReference>
<dbReference type="GO" id="GO:0005737">
    <property type="term" value="C:cytoplasm"/>
    <property type="evidence" value="ECO:0007669"/>
    <property type="project" value="UniProtKB-SubCell"/>
</dbReference>
<dbReference type="GO" id="GO:0005524">
    <property type="term" value="F:ATP binding"/>
    <property type="evidence" value="ECO:0007669"/>
    <property type="project" value="UniProtKB-UniRule"/>
</dbReference>
<dbReference type="GO" id="GO:0004828">
    <property type="term" value="F:serine-tRNA ligase activity"/>
    <property type="evidence" value="ECO:0007669"/>
    <property type="project" value="UniProtKB-UniRule"/>
</dbReference>
<dbReference type="GO" id="GO:0016260">
    <property type="term" value="P:selenocysteine biosynthetic process"/>
    <property type="evidence" value="ECO:0007669"/>
    <property type="project" value="UniProtKB-UniRule"/>
</dbReference>
<dbReference type="GO" id="GO:0006434">
    <property type="term" value="P:seryl-tRNA aminoacylation"/>
    <property type="evidence" value="ECO:0007669"/>
    <property type="project" value="UniProtKB-UniRule"/>
</dbReference>
<dbReference type="CDD" id="cd00770">
    <property type="entry name" value="SerRS_core"/>
    <property type="match status" value="1"/>
</dbReference>
<dbReference type="Gene3D" id="3.30.930.10">
    <property type="entry name" value="Bira Bifunctional Protein, Domain 2"/>
    <property type="match status" value="1"/>
</dbReference>
<dbReference type="Gene3D" id="1.10.287.40">
    <property type="entry name" value="Serine-tRNA synthetase, tRNA binding domain"/>
    <property type="match status" value="2"/>
</dbReference>
<dbReference type="HAMAP" id="MF_00176">
    <property type="entry name" value="Ser_tRNA_synth_type1"/>
    <property type="match status" value="1"/>
</dbReference>
<dbReference type="InterPro" id="IPR002314">
    <property type="entry name" value="aa-tRNA-synt_IIb"/>
</dbReference>
<dbReference type="InterPro" id="IPR006195">
    <property type="entry name" value="aa-tRNA-synth_II"/>
</dbReference>
<dbReference type="InterPro" id="IPR045864">
    <property type="entry name" value="aa-tRNA-synth_II/BPL/LPL"/>
</dbReference>
<dbReference type="InterPro" id="IPR002317">
    <property type="entry name" value="Ser-tRNA-ligase_type_1"/>
</dbReference>
<dbReference type="InterPro" id="IPR015866">
    <property type="entry name" value="Ser-tRNA-synth_1_N"/>
</dbReference>
<dbReference type="InterPro" id="IPR042103">
    <property type="entry name" value="SerRS_1_N_sf"/>
</dbReference>
<dbReference type="InterPro" id="IPR033729">
    <property type="entry name" value="SerRS_core"/>
</dbReference>
<dbReference type="InterPro" id="IPR010978">
    <property type="entry name" value="tRNA-bd_arm"/>
</dbReference>
<dbReference type="NCBIfam" id="TIGR00414">
    <property type="entry name" value="serS"/>
    <property type="match status" value="1"/>
</dbReference>
<dbReference type="PANTHER" id="PTHR43697:SF1">
    <property type="entry name" value="SERINE--TRNA LIGASE"/>
    <property type="match status" value="1"/>
</dbReference>
<dbReference type="PANTHER" id="PTHR43697">
    <property type="entry name" value="SERYL-TRNA SYNTHETASE"/>
    <property type="match status" value="1"/>
</dbReference>
<dbReference type="Pfam" id="PF02403">
    <property type="entry name" value="Seryl_tRNA_N"/>
    <property type="match status" value="1"/>
</dbReference>
<dbReference type="Pfam" id="PF00587">
    <property type="entry name" value="tRNA-synt_2b"/>
    <property type="match status" value="1"/>
</dbReference>
<dbReference type="PIRSF" id="PIRSF001529">
    <property type="entry name" value="Ser-tRNA-synth_IIa"/>
    <property type="match status" value="1"/>
</dbReference>
<dbReference type="PRINTS" id="PR00981">
    <property type="entry name" value="TRNASYNTHSER"/>
</dbReference>
<dbReference type="SUPFAM" id="SSF55681">
    <property type="entry name" value="Class II aaRS and biotin synthetases"/>
    <property type="match status" value="1"/>
</dbReference>
<dbReference type="SUPFAM" id="SSF46589">
    <property type="entry name" value="tRNA-binding arm"/>
    <property type="match status" value="1"/>
</dbReference>
<dbReference type="PROSITE" id="PS50862">
    <property type="entry name" value="AA_TRNA_LIGASE_II"/>
    <property type="match status" value="1"/>
</dbReference>
<organism>
    <name type="scientific">Deinococcus geothermalis (strain DSM 11300 / CIP 105573 / AG-3a)</name>
    <dbReference type="NCBI Taxonomy" id="319795"/>
    <lineage>
        <taxon>Bacteria</taxon>
        <taxon>Thermotogati</taxon>
        <taxon>Deinococcota</taxon>
        <taxon>Deinococci</taxon>
        <taxon>Deinococcales</taxon>
        <taxon>Deinococcaceae</taxon>
        <taxon>Deinococcus</taxon>
    </lineage>
</organism>
<proteinExistence type="inferred from homology"/>
<sequence length="437" mass="48776">MLDLKFIREHPGTVKHAIAVKGVNLDLDELLRIDRELVELRQRVEALQTERNANAKLVPKATPEERPHLIQKGKDLAEDIKALEPQLRAHEDQLRQLLLRVPNIPHPSVPVGQDDSENVELRREGQLPEFAFPPLDHVELLERQGWSDPERVARVSGSRSYLLKGDAVLLEMAVLMFALDFLRGRGLTPLSTTALVRPETLVGSGHFPGGEDQVYKIEGDELMLAGTAEVPVNSLYAGEQLSYEELPLAFAAISAAFRSEAGSAGRDVRGLIRVHEFRKVEQYVMTRADEAEALRWFGAILENAEGLLRALELPYRVVQNCTGDMGAGKVLMYDIETWVPSEGKYRETHSCSYLGDWQARRTGLRYRDEHGKLVYAHTLNNTGIATPRILVPLLENHQQADGTIRVPEALRPYLGGREVLGVPVRAAAAEAKSPRNK</sequence>
<evidence type="ECO:0000255" key="1">
    <source>
        <dbReference type="HAMAP-Rule" id="MF_00176"/>
    </source>
</evidence>
<reference key="1">
    <citation type="submission" date="2006-04" db="EMBL/GenBank/DDBJ databases">
        <title>Complete sequence of chromosome of Deinococcus geothermalis DSM 11300.</title>
        <authorList>
            <person name="Copeland A."/>
            <person name="Lucas S."/>
            <person name="Lapidus A."/>
            <person name="Barry K."/>
            <person name="Detter J.C."/>
            <person name="Glavina del Rio T."/>
            <person name="Hammon N."/>
            <person name="Israni S."/>
            <person name="Dalin E."/>
            <person name="Tice H."/>
            <person name="Pitluck S."/>
            <person name="Brettin T."/>
            <person name="Bruce D."/>
            <person name="Han C."/>
            <person name="Tapia R."/>
            <person name="Saunders E."/>
            <person name="Gilna P."/>
            <person name="Schmutz J."/>
            <person name="Larimer F."/>
            <person name="Land M."/>
            <person name="Hauser L."/>
            <person name="Kyrpides N."/>
            <person name="Kim E."/>
            <person name="Daly M.J."/>
            <person name="Fredrickson J.K."/>
            <person name="Makarova K.S."/>
            <person name="Gaidamakova E.K."/>
            <person name="Zhai M."/>
            <person name="Richardson P."/>
        </authorList>
    </citation>
    <scope>NUCLEOTIDE SEQUENCE [LARGE SCALE GENOMIC DNA]</scope>
    <source>
        <strain>DSM 11300 / CIP 105573 / AG-3a</strain>
    </source>
</reference>
<comment type="function">
    <text evidence="1">Catalyzes the attachment of serine to tRNA(Ser). Is also able to aminoacylate tRNA(Sec) with serine, to form the misacylated tRNA L-seryl-tRNA(Sec), which will be further converted into selenocysteinyl-tRNA(Sec).</text>
</comment>
<comment type="catalytic activity">
    <reaction evidence="1">
        <text>tRNA(Ser) + L-serine + ATP = L-seryl-tRNA(Ser) + AMP + diphosphate + H(+)</text>
        <dbReference type="Rhea" id="RHEA:12292"/>
        <dbReference type="Rhea" id="RHEA-COMP:9669"/>
        <dbReference type="Rhea" id="RHEA-COMP:9703"/>
        <dbReference type="ChEBI" id="CHEBI:15378"/>
        <dbReference type="ChEBI" id="CHEBI:30616"/>
        <dbReference type="ChEBI" id="CHEBI:33019"/>
        <dbReference type="ChEBI" id="CHEBI:33384"/>
        <dbReference type="ChEBI" id="CHEBI:78442"/>
        <dbReference type="ChEBI" id="CHEBI:78533"/>
        <dbReference type="ChEBI" id="CHEBI:456215"/>
        <dbReference type="EC" id="6.1.1.11"/>
    </reaction>
</comment>
<comment type="catalytic activity">
    <reaction evidence="1">
        <text>tRNA(Sec) + L-serine + ATP = L-seryl-tRNA(Sec) + AMP + diphosphate + H(+)</text>
        <dbReference type="Rhea" id="RHEA:42580"/>
        <dbReference type="Rhea" id="RHEA-COMP:9742"/>
        <dbReference type="Rhea" id="RHEA-COMP:10128"/>
        <dbReference type="ChEBI" id="CHEBI:15378"/>
        <dbReference type="ChEBI" id="CHEBI:30616"/>
        <dbReference type="ChEBI" id="CHEBI:33019"/>
        <dbReference type="ChEBI" id="CHEBI:33384"/>
        <dbReference type="ChEBI" id="CHEBI:78442"/>
        <dbReference type="ChEBI" id="CHEBI:78533"/>
        <dbReference type="ChEBI" id="CHEBI:456215"/>
        <dbReference type="EC" id="6.1.1.11"/>
    </reaction>
</comment>
<comment type="pathway">
    <text evidence="1">Aminoacyl-tRNA biosynthesis; selenocysteinyl-tRNA(Sec) biosynthesis; L-seryl-tRNA(Sec) from L-serine and tRNA(Sec): step 1/1.</text>
</comment>
<comment type="subunit">
    <text evidence="1">Homodimer. The tRNA molecule binds across the dimer.</text>
</comment>
<comment type="subcellular location">
    <subcellularLocation>
        <location evidence="1">Cytoplasm</location>
    </subcellularLocation>
</comment>
<comment type="domain">
    <text evidence="1">Consists of two distinct domains, a catalytic core and a N-terminal extension that is involved in tRNA binding.</text>
</comment>
<comment type="similarity">
    <text evidence="1">Belongs to the class-II aminoacyl-tRNA synthetase family. Type-1 seryl-tRNA synthetase subfamily.</text>
</comment>
<protein>
    <recommendedName>
        <fullName evidence="1">Serine--tRNA ligase</fullName>
        <ecNumber evidence="1">6.1.1.11</ecNumber>
    </recommendedName>
    <alternativeName>
        <fullName evidence="1">Seryl-tRNA synthetase</fullName>
        <shortName evidence="1">SerRS</shortName>
    </alternativeName>
    <alternativeName>
        <fullName evidence="1">Seryl-tRNA(Ser/Sec) synthetase</fullName>
    </alternativeName>
</protein>
<accession>Q1IZU9</accession>
<name>SYS_DEIGD</name>
<keyword id="KW-0030">Aminoacyl-tRNA synthetase</keyword>
<keyword id="KW-0067">ATP-binding</keyword>
<keyword id="KW-0963">Cytoplasm</keyword>
<keyword id="KW-0436">Ligase</keyword>
<keyword id="KW-0547">Nucleotide-binding</keyword>
<keyword id="KW-0648">Protein biosynthesis</keyword>
<feature type="chain" id="PRO_1000019668" description="Serine--tRNA ligase">
    <location>
        <begin position="1"/>
        <end position="437"/>
    </location>
</feature>
<feature type="binding site" evidence="1">
    <location>
        <begin position="227"/>
        <end position="229"/>
    </location>
    <ligand>
        <name>L-serine</name>
        <dbReference type="ChEBI" id="CHEBI:33384"/>
    </ligand>
</feature>
<feature type="binding site" evidence="1">
    <location>
        <begin position="258"/>
        <end position="260"/>
    </location>
    <ligand>
        <name>ATP</name>
        <dbReference type="ChEBI" id="CHEBI:30616"/>
    </ligand>
</feature>
<feature type="binding site" evidence="1">
    <location>
        <position position="274"/>
    </location>
    <ligand>
        <name>ATP</name>
        <dbReference type="ChEBI" id="CHEBI:30616"/>
    </ligand>
</feature>
<feature type="binding site" evidence="1">
    <location>
        <position position="281"/>
    </location>
    <ligand>
        <name>L-serine</name>
        <dbReference type="ChEBI" id="CHEBI:33384"/>
    </ligand>
</feature>
<feature type="binding site" evidence="1">
    <location>
        <begin position="347"/>
        <end position="350"/>
    </location>
    <ligand>
        <name>ATP</name>
        <dbReference type="ChEBI" id="CHEBI:30616"/>
    </ligand>
</feature>
<feature type="binding site" evidence="1">
    <location>
        <position position="382"/>
    </location>
    <ligand>
        <name>L-serine</name>
        <dbReference type="ChEBI" id="CHEBI:33384"/>
    </ligand>
</feature>
<gene>
    <name evidence="1" type="primary">serS</name>
    <name type="ordered locus">Dgeo_0934</name>
</gene>